<organism>
    <name type="scientific">Mycobacterium leprae (strain TN)</name>
    <dbReference type="NCBI Taxonomy" id="272631"/>
    <lineage>
        <taxon>Bacteria</taxon>
        <taxon>Bacillati</taxon>
        <taxon>Actinomycetota</taxon>
        <taxon>Actinomycetes</taxon>
        <taxon>Mycobacteriales</taxon>
        <taxon>Mycobacteriaceae</taxon>
        <taxon>Mycobacterium</taxon>
    </lineage>
</organism>
<feature type="chain" id="PRO_0000135264" description="Coproporphyrinogen III oxidase">
    <location>
        <begin position="1"/>
        <end position="451"/>
    </location>
</feature>
<feature type="binding site" evidence="1">
    <location>
        <begin position="10"/>
        <end position="15"/>
    </location>
    <ligand>
        <name>FAD</name>
        <dbReference type="ChEBI" id="CHEBI:57692"/>
    </ligand>
</feature>
<feature type="binding site" evidence="1">
    <location>
        <begin position="36"/>
        <end position="37"/>
    </location>
    <ligand>
        <name>FAD</name>
        <dbReference type="ChEBI" id="CHEBI:57692"/>
    </ligand>
</feature>
<feature type="binding site" evidence="1">
    <location>
        <begin position="58"/>
        <end position="61"/>
    </location>
    <ligand>
        <name>FAD</name>
        <dbReference type="ChEBI" id="CHEBI:57692"/>
    </ligand>
</feature>
<feature type="binding site" evidence="2">
    <location>
        <position position="242"/>
    </location>
    <ligand>
        <name>FAD</name>
        <dbReference type="ChEBI" id="CHEBI:57692"/>
    </ligand>
</feature>
<feature type="binding site" evidence="1">
    <location>
        <position position="393"/>
    </location>
    <ligand>
        <name>FAD</name>
        <dbReference type="ChEBI" id="CHEBI:57692"/>
    </ligand>
</feature>
<feature type="binding site" evidence="1">
    <location>
        <begin position="429"/>
        <end position="431"/>
    </location>
    <ligand>
        <name>FAD</name>
        <dbReference type="ChEBI" id="CHEBI:57692"/>
    </ligand>
</feature>
<name>CGOX_MYCLE</name>
<proteinExistence type="inferred from homology"/>
<accession>Q50008</accession>
<comment type="function">
    <text evidence="1">Involved in coproporphyrin-dependent heme b biosynthesis. Catalyzes the oxidation of coproporphyrinogen III to coproporphyrin III.</text>
</comment>
<comment type="catalytic activity">
    <reaction evidence="1">
        <text>coproporphyrinogen III + 3 O2 = coproporphyrin III + 3 H2O2</text>
        <dbReference type="Rhea" id="RHEA:43436"/>
        <dbReference type="ChEBI" id="CHEBI:15379"/>
        <dbReference type="ChEBI" id="CHEBI:16240"/>
        <dbReference type="ChEBI" id="CHEBI:57309"/>
        <dbReference type="ChEBI" id="CHEBI:131725"/>
        <dbReference type="EC" id="1.3.3.15"/>
    </reaction>
    <physiologicalReaction direction="left-to-right" evidence="1">
        <dbReference type="Rhea" id="RHEA:43437"/>
    </physiologicalReaction>
</comment>
<comment type="cofactor">
    <cofactor evidence="1">
        <name>FAD</name>
        <dbReference type="ChEBI" id="CHEBI:57692"/>
    </cofactor>
    <text evidence="1">Binds 1 FAD per subunit.</text>
</comment>
<comment type="pathway">
    <text evidence="1">Porphyrin-containing compound metabolism; protoheme biosynthesis.</text>
</comment>
<comment type="subcellular location">
    <subcellularLocation>
        <location evidence="1">Cytoplasm</location>
    </subcellularLocation>
</comment>
<comment type="similarity">
    <text evidence="3">Belongs to the protoporphyrinogen/coproporphyrinogen oxidase family. Coproporphyrinogen III oxidase subfamily.</text>
</comment>
<protein>
    <recommendedName>
        <fullName evidence="1">Coproporphyrinogen III oxidase</fullName>
        <ecNumber evidence="1">1.3.3.15</ecNumber>
    </recommendedName>
</protein>
<keyword id="KW-0963">Cytoplasm</keyword>
<keyword id="KW-0274">FAD</keyword>
<keyword id="KW-0285">Flavoprotein</keyword>
<keyword id="KW-0350">Heme biosynthesis</keyword>
<keyword id="KW-0560">Oxidoreductase</keyword>
<keyword id="KW-1185">Reference proteome</keyword>
<dbReference type="EC" id="1.3.3.15" evidence="1"/>
<dbReference type="EMBL" id="U15181">
    <property type="protein sequence ID" value="AAA62958.1"/>
    <property type="molecule type" value="Genomic_DNA"/>
</dbReference>
<dbReference type="EMBL" id="AL583920">
    <property type="protein sequence ID" value="CAC31425.1"/>
    <property type="molecule type" value="Genomic_DNA"/>
</dbReference>
<dbReference type="PIR" id="F87039">
    <property type="entry name" value="F87039"/>
</dbReference>
<dbReference type="RefSeq" id="NP_301770.1">
    <property type="nucleotide sequence ID" value="NC_002677.1"/>
</dbReference>
<dbReference type="RefSeq" id="WP_010908094.1">
    <property type="nucleotide sequence ID" value="NC_002677.1"/>
</dbReference>
<dbReference type="SMR" id="Q50008"/>
<dbReference type="STRING" id="272631.gene:17574870"/>
<dbReference type="KEGG" id="mle:ML1044"/>
<dbReference type="PATRIC" id="fig|272631.5.peg.1876"/>
<dbReference type="Leproma" id="ML1044"/>
<dbReference type="eggNOG" id="COG1232">
    <property type="taxonomic scope" value="Bacteria"/>
</dbReference>
<dbReference type="HOGENOM" id="CLU_009629_3_1_11"/>
<dbReference type="OrthoDB" id="4496419at2"/>
<dbReference type="UniPathway" id="UPA00252"/>
<dbReference type="Proteomes" id="UP000000806">
    <property type="component" value="Chromosome"/>
</dbReference>
<dbReference type="GO" id="GO:0005737">
    <property type="term" value="C:cytoplasm"/>
    <property type="evidence" value="ECO:0007669"/>
    <property type="project" value="UniProtKB-SubCell"/>
</dbReference>
<dbReference type="GO" id="GO:0004729">
    <property type="term" value="F:oxygen-dependent protoporphyrinogen oxidase activity"/>
    <property type="evidence" value="ECO:0007669"/>
    <property type="project" value="InterPro"/>
</dbReference>
<dbReference type="GO" id="GO:0006783">
    <property type="term" value="P:heme biosynthetic process"/>
    <property type="evidence" value="ECO:0007669"/>
    <property type="project" value="UniProtKB-KW"/>
</dbReference>
<dbReference type="Gene3D" id="3.50.50.60">
    <property type="entry name" value="FAD/NAD(P)-binding domain"/>
    <property type="match status" value="1"/>
</dbReference>
<dbReference type="Gene3D" id="1.10.3110.10">
    <property type="entry name" value="protoporphyrinogen ix oxidase, domain 3"/>
    <property type="match status" value="1"/>
</dbReference>
<dbReference type="Gene3D" id="3.90.660.20">
    <property type="entry name" value="Protoporphyrinogen oxidase, mitochondrial, domain 2"/>
    <property type="match status" value="1"/>
</dbReference>
<dbReference type="InterPro" id="IPR002937">
    <property type="entry name" value="Amino_oxidase"/>
</dbReference>
<dbReference type="InterPro" id="IPR036188">
    <property type="entry name" value="FAD/NAD-bd_sf"/>
</dbReference>
<dbReference type="InterPro" id="IPR004572">
    <property type="entry name" value="Protoporphyrinogen_oxidase"/>
</dbReference>
<dbReference type="InterPro" id="IPR050464">
    <property type="entry name" value="Zeta_carotene_desat/Oxidored"/>
</dbReference>
<dbReference type="NCBIfam" id="NF008841">
    <property type="entry name" value="PRK11883.1-1"/>
    <property type="match status" value="1"/>
</dbReference>
<dbReference type="NCBIfam" id="TIGR00562">
    <property type="entry name" value="proto_IX_ox"/>
    <property type="match status" value="1"/>
</dbReference>
<dbReference type="PANTHER" id="PTHR42923">
    <property type="entry name" value="PROTOPORPHYRINOGEN OXIDASE"/>
    <property type="match status" value="1"/>
</dbReference>
<dbReference type="PANTHER" id="PTHR42923:SF3">
    <property type="entry name" value="PROTOPORPHYRINOGEN OXIDASE"/>
    <property type="match status" value="1"/>
</dbReference>
<dbReference type="Pfam" id="PF01593">
    <property type="entry name" value="Amino_oxidase"/>
    <property type="match status" value="1"/>
</dbReference>
<dbReference type="SUPFAM" id="SSF54373">
    <property type="entry name" value="FAD-linked reductases, C-terminal domain"/>
    <property type="match status" value="1"/>
</dbReference>
<dbReference type="SUPFAM" id="SSF51905">
    <property type="entry name" value="FAD/NAD(P)-binding domain"/>
    <property type="match status" value="1"/>
</dbReference>
<gene>
    <name evidence="1" type="primary">cgoX</name>
    <name type="synonym">hemY</name>
    <name type="ordered locus">ML1044</name>
</gene>
<sequence>MTSRSYCVVGGGISGLTAAYRLRVATGDDVAITLFDPGDRLGGVLRTECVGGQPMDLGAEAFLLRRPEVPALLAELGLSERQRATTDARPLIYSQQRLHSLPPDTVAGIPSSATSVAGLVDDATVARIGAEAVRPLSWEPGSDPAMAELVADRFGEQAVARLVDPLLGGVYAGSAATIGLRAGAPSVAAALDCGATSLMEAVRQGLPPVAAGPVFGALDGGYQVLIDELVRRSRLQWVAATVVGLDRGTCGWTLVDDTGACWSADGVILAVPAPRLVRLLQQIAPRTVAAASRIVSASSAVVALSVPRDTTFPQNSGVLVASGERLRAKAVTLSSRKWGLQGDTQLVRLSFGKFGDQVASTASDDELLAWAVSDLAAVFDVTVDPVDVCVQRWIDAMPQYGPGHADLVAEVRAGLPPTLVVAGSHMDGIGVPACISAAGRAIEALQAEVAR</sequence>
<evidence type="ECO:0000250" key="1">
    <source>
        <dbReference type="UniProtKB" id="P32397"/>
    </source>
</evidence>
<evidence type="ECO:0000250" key="2">
    <source>
        <dbReference type="UniProtKB" id="P56601"/>
    </source>
</evidence>
<evidence type="ECO:0000305" key="3"/>
<reference key="1">
    <citation type="submission" date="1994-09" db="EMBL/GenBank/DDBJ databases">
        <authorList>
            <person name="Smith D.R."/>
            <person name="Robison K."/>
        </authorList>
    </citation>
    <scope>NUCLEOTIDE SEQUENCE [GENOMIC DNA]</scope>
</reference>
<reference key="2">
    <citation type="journal article" date="2001" name="Nature">
        <title>Massive gene decay in the leprosy bacillus.</title>
        <authorList>
            <person name="Cole S.T."/>
            <person name="Eiglmeier K."/>
            <person name="Parkhill J."/>
            <person name="James K.D."/>
            <person name="Thomson N.R."/>
            <person name="Wheeler P.R."/>
            <person name="Honore N."/>
            <person name="Garnier T."/>
            <person name="Churcher C.M."/>
            <person name="Harris D.E."/>
            <person name="Mungall K.L."/>
            <person name="Basham D."/>
            <person name="Brown D."/>
            <person name="Chillingworth T."/>
            <person name="Connor R."/>
            <person name="Davies R.M."/>
            <person name="Devlin K."/>
            <person name="Duthoy S."/>
            <person name="Feltwell T."/>
            <person name="Fraser A."/>
            <person name="Hamlin N."/>
            <person name="Holroyd S."/>
            <person name="Hornsby T."/>
            <person name="Jagels K."/>
            <person name="Lacroix C."/>
            <person name="Maclean J."/>
            <person name="Moule S."/>
            <person name="Murphy L.D."/>
            <person name="Oliver K."/>
            <person name="Quail M.A."/>
            <person name="Rajandream M.A."/>
            <person name="Rutherford K.M."/>
            <person name="Rutter S."/>
            <person name="Seeger K."/>
            <person name="Simon S."/>
            <person name="Simmonds M."/>
            <person name="Skelton J."/>
            <person name="Squares R."/>
            <person name="Squares S."/>
            <person name="Stevens K."/>
            <person name="Taylor K."/>
            <person name="Whitehead S."/>
            <person name="Woodward J.R."/>
            <person name="Barrell B.G."/>
        </authorList>
    </citation>
    <scope>NUCLEOTIDE SEQUENCE [LARGE SCALE GENOMIC DNA]</scope>
    <source>
        <strain>TN</strain>
    </source>
</reference>